<name>P1P_LACLC</name>
<comment type="function">
    <text>Protease which breaks down milk proteins during the growth of the bacteria on milk.</text>
</comment>
<comment type="catalytic activity">
    <reaction>
        <text>Endopeptidase activity with very broad specificity, although some subsite preference have been noted, e.g. large hydrophobic residues in the P1 and P4 positions, and Pro in the P2 position. Best known for its action on caseins, although it has been shown to hydrolyze hemoglobin and oxidized insulin B-chain.</text>
        <dbReference type="EC" id="3.4.21.96"/>
    </reaction>
</comment>
<comment type="subcellular location">
    <subcellularLocation>
        <location evidence="1">Secreted</location>
        <location evidence="1">Cell wall</location>
        <topology evidence="1">Peptidoglycan-anchor</topology>
    </subcellularLocation>
</comment>
<comment type="similarity">
    <text evidence="4">Belongs to the peptidase S8 family.</text>
</comment>
<protein>
    <recommendedName>
        <fullName>PI-type proteinase</fullName>
        <ecNumber>3.4.21.96</ecNumber>
    </recommendedName>
    <alternativeName>
        <fullName>Wall-associated serine proteinase</fullName>
    </alternativeName>
</protein>
<proteinExistence type="inferred from homology"/>
<organism>
    <name type="scientific">Lactococcus lactis subsp. cremoris</name>
    <name type="common">Streptococcus cremoris</name>
    <dbReference type="NCBI Taxonomy" id="1359"/>
    <lineage>
        <taxon>Bacteria</taxon>
        <taxon>Bacillati</taxon>
        <taxon>Bacillota</taxon>
        <taxon>Bacilli</taxon>
        <taxon>Lactobacillales</taxon>
        <taxon>Streptococcaceae</taxon>
        <taxon>Lactococcus</taxon>
    </lineage>
</organism>
<geneLocation type="plasmid">
    <name>pWV05</name>
</geneLocation>
<feature type="signal peptide">
    <location>
        <begin position="1"/>
        <end position="33"/>
    </location>
</feature>
<feature type="propeptide" id="PRO_0000027086">
    <location>
        <begin position="34"/>
        <end position="187"/>
    </location>
</feature>
<feature type="chain" id="PRO_0000027087" description="PI-type proteinase">
    <location>
        <begin position="188"/>
        <end position="1870"/>
    </location>
</feature>
<feature type="propeptide" id="PRO_0000027088" description="Removed by sortase" evidence="1">
    <location>
        <begin position="1871"/>
        <end position="1902"/>
    </location>
</feature>
<feature type="domain" description="Peptidase S8" evidence="2">
    <location>
        <begin position="191"/>
        <end position="697"/>
    </location>
</feature>
<feature type="region of interest" description="Disordered" evidence="3">
    <location>
        <begin position="1796"/>
        <end position="1874"/>
    </location>
</feature>
<feature type="short sequence motif" description="LPXTG sorting signal" evidence="1">
    <location>
        <begin position="1867"/>
        <end position="1871"/>
    </location>
</feature>
<feature type="compositionally biased region" description="Gly residues" evidence="3">
    <location>
        <begin position="1797"/>
        <end position="1812"/>
    </location>
</feature>
<feature type="compositionally biased region" description="Polar residues" evidence="3">
    <location>
        <begin position="1830"/>
        <end position="1843"/>
    </location>
</feature>
<feature type="active site" description="Charge relay system" evidence="2">
    <location>
        <position position="217"/>
    </location>
</feature>
<feature type="active site" description="Charge relay system" evidence="2">
    <location>
        <position position="281"/>
    </location>
</feature>
<feature type="active site" description="Charge relay system" evidence="2">
    <location>
        <position position="620"/>
    </location>
</feature>
<feature type="modified residue" description="Pentaglycyl murein peptidoglycan amidated threonine" evidence="1">
    <location>
        <position position="1870"/>
    </location>
</feature>
<evidence type="ECO:0000255" key="1">
    <source>
        <dbReference type="PROSITE-ProRule" id="PRU00477"/>
    </source>
</evidence>
<evidence type="ECO:0000255" key="2">
    <source>
        <dbReference type="PROSITE-ProRule" id="PRU01240"/>
    </source>
</evidence>
<evidence type="ECO:0000256" key="3">
    <source>
        <dbReference type="SAM" id="MobiDB-lite"/>
    </source>
</evidence>
<evidence type="ECO:0000305" key="4"/>
<dbReference type="EC" id="3.4.21.96"/>
<dbReference type="EMBL" id="M24767">
    <property type="protein sequence ID" value="AAA17677.1"/>
    <property type="molecule type" value="Unassigned_DNA"/>
</dbReference>
<dbReference type="SMR" id="P16271"/>
<dbReference type="MEROPS" id="S08.019"/>
<dbReference type="SABIO-RK" id="P16271"/>
<dbReference type="GO" id="GO:0005576">
    <property type="term" value="C:extracellular region"/>
    <property type="evidence" value="ECO:0007669"/>
    <property type="project" value="UniProtKB-KW"/>
</dbReference>
<dbReference type="GO" id="GO:0016020">
    <property type="term" value="C:membrane"/>
    <property type="evidence" value="ECO:0007669"/>
    <property type="project" value="InterPro"/>
</dbReference>
<dbReference type="GO" id="GO:0004252">
    <property type="term" value="F:serine-type endopeptidase activity"/>
    <property type="evidence" value="ECO:0007669"/>
    <property type="project" value="InterPro"/>
</dbReference>
<dbReference type="GO" id="GO:0006508">
    <property type="term" value="P:proteolysis"/>
    <property type="evidence" value="ECO:0007669"/>
    <property type="project" value="UniProtKB-KW"/>
</dbReference>
<dbReference type="CDD" id="cd07475">
    <property type="entry name" value="Peptidases_S8_C5a_Peptidase"/>
    <property type="match status" value="1"/>
</dbReference>
<dbReference type="Gene3D" id="2.60.40.4070">
    <property type="match status" value="1"/>
</dbReference>
<dbReference type="Gene3D" id="3.50.30.30">
    <property type="match status" value="1"/>
</dbReference>
<dbReference type="Gene3D" id="2.60.40.10">
    <property type="entry name" value="Immunoglobulins"/>
    <property type="match status" value="2"/>
</dbReference>
<dbReference type="Gene3D" id="3.40.50.200">
    <property type="entry name" value="Peptidase S8/S53 domain"/>
    <property type="match status" value="1"/>
</dbReference>
<dbReference type="Gene3D" id="2.60.40.1710">
    <property type="entry name" value="Subtilisin-like superfamily"/>
    <property type="match status" value="1"/>
</dbReference>
<dbReference type="InterPro" id="IPR010435">
    <property type="entry name" value="C5a/SBT2-like_Fn3"/>
</dbReference>
<dbReference type="InterPro" id="IPR034216">
    <property type="entry name" value="C5a_Peptidase"/>
</dbReference>
<dbReference type="InterPro" id="IPR013783">
    <property type="entry name" value="Ig-like_fold"/>
</dbReference>
<dbReference type="InterPro" id="IPR019931">
    <property type="entry name" value="LPXTG_anchor"/>
</dbReference>
<dbReference type="InterPro" id="IPR046450">
    <property type="entry name" value="PA_dom_sf"/>
</dbReference>
<dbReference type="InterPro" id="IPR003137">
    <property type="entry name" value="PA_domain"/>
</dbReference>
<dbReference type="InterPro" id="IPR000209">
    <property type="entry name" value="Peptidase_S8/S53_dom"/>
</dbReference>
<dbReference type="InterPro" id="IPR036852">
    <property type="entry name" value="Peptidase_S8/S53_dom_sf"/>
</dbReference>
<dbReference type="InterPro" id="IPR023827">
    <property type="entry name" value="Peptidase_S8_Asp-AS"/>
</dbReference>
<dbReference type="InterPro" id="IPR022398">
    <property type="entry name" value="Peptidase_S8_His-AS"/>
</dbReference>
<dbReference type="InterPro" id="IPR023828">
    <property type="entry name" value="Peptidase_S8_Ser-AS"/>
</dbReference>
<dbReference type="InterPro" id="IPR050131">
    <property type="entry name" value="Peptidase_S8_subtilisin-like"/>
</dbReference>
<dbReference type="InterPro" id="IPR015500">
    <property type="entry name" value="Peptidase_S8_subtilisin-rel"/>
</dbReference>
<dbReference type="NCBIfam" id="TIGR01167">
    <property type="entry name" value="LPXTG_anchor"/>
    <property type="match status" value="1"/>
</dbReference>
<dbReference type="PANTHER" id="PTHR43806:SF11">
    <property type="entry name" value="CEREVISIN-RELATED"/>
    <property type="match status" value="1"/>
</dbReference>
<dbReference type="PANTHER" id="PTHR43806">
    <property type="entry name" value="PEPTIDASE S8"/>
    <property type="match status" value="1"/>
</dbReference>
<dbReference type="Pfam" id="PF06280">
    <property type="entry name" value="fn3_5"/>
    <property type="match status" value="1"/>
</dbReference>
<dbReference type="Pfam" id="PF09136">
    <property type="entry name" value="Glucodextran_B"/>
    <property type="match status" value="1"/>
</dbReference>
<dbReference type="Pfam" id="PF00746">
    <property type="entry name" value="Gram_pos_anchor"/>
    <property type="match status" value="1"/>
</dbReference>
<dbReference type="Pfam" id="PF02225">
    <property type="entry name" value="PA"/>
    <property type="match status" value="1"/>
</dbReference>
<dbReference type="Pfam" id="PF00082">
    <property type="entry name" value="Peptidase_S8"/>
    <property type="match status" value="1"/>
</dbReference>
<dbReference type="PRINTS" id="PR00723">
    <property type="entry name" value="SUBTILISIN"/>
</dbReference>
<dbReference type="SUPFAM" id="SSF52025">
    <property type="entry name" value="PA domain"/>
    <property type="match status" value="1"/>
</dbReference>
<dbReference type="SUPFAM" id="SSF52743">
    <property type="entry name" value="Subtilisin-like"/>
    <property type="match status" value="1"/>
</dbReference>
<dbReference type="PROSITE" id="PS50847">
    <property type="entry name" value="GRAM_POS_ANCHORING"/>
    <property type="match status" value="1"/>
</dbReference>
<dbReference type="PROSITE" id="PS51892">
    <property type="entry name" value="SUBTILASE"/>
    <property type="match status" value="1"/>
</dbReference>
<dbReference type="PROSITE" id="PS00136">
    <property type="entry name" value="SUBTILASE_ASP"/>
    <property type="match status" value="1"/>
</dbReference>
<dbReference type="PROSITE" id="PS00137">
    <property type="entry name" value="SUBTILASE_HIS"/>
    <property type="match status" value="1"/>
</dbReference>
<dbReference type="PROSITE" id="PS00138">
    <property type="entry name" value="SUBTILASE_SER"/>
    <property type="match status" value="1"/>
</dbReference>
<accession>P16271</accession>
<reference key="1">
    <citation type="journal article" date="1988" name="Appl. Environ. Microbiol.">
        <title>Nucleotide sequence of the cell wall proteinase gene of Streptococcus cremoris Wg2.</title>
        <authorList>
            <person name="Kok J."/>
            <person name="Leenhouts K.J."/>
            <person name="Haandrikman A.J."/>
            <person name="Ledeboer A.M."/>
            <person name="Venema G."/>
        </authorList>
    </citation>
    <scope>NUCLEOTIDE SEQUENCE [GENOMIC DNA]</scope>
    <source>
        <strain>Wg2</strain>
    </source>
</reference>
<gene>
    <name type="primary">prtP</name>
</gene>
<keyword id="KW-0134">Cell wall</keyword>
<keyword id="KW-0378">Hydrolase</keyword>
<keyword id="KW-0572">Peptidoglycan-anchor</keyword>
<keyword id="KW-0614">Plasmid</keyword>
<keyword id="KW-0645">Protease</keyword>
<keyword id="KW-0677">Repeat</keyword>
<keyword id="KW-0964">Secreted</keyword>
<keyword id="KW-0720">Serine protease</keyword>
<keyword id="KW-0732">Signal</keyword>
<keyword id="KW-0865">Zymogen</keyword>
<sequence>MQRKKKGLSILLAGTVALGALAVLPVGEIQAKAAISQQTKGSSLANTVTAATAKQAATDTTAATTNQAIATQLAAKGIDYNKLNKVQQQDIYVDVIVQMSAAPASENGTLRTDYSSTAEIQQETNKVIAAQASVKAAVEQVTQQTAGESYGYVVNGFSTKVRVVDIPKLKQIAGVKTVTLAKVYYPTDAKANSMANVQAVWSNYKYKGEGTVVSVIDSGIDPTHKDMRLSDDKDVKLTKSDVEKFTDTAKHGRYFNSKVPYGFNYADNNDTITDDTVDEQHGMHVAGIIGANGTGDDPAKSVVGVAPEAQLLAMKVFTNSDTSATTGSSTLVSAIEDSAKIGADVLNMSLGSDSGNQTLEDPELAAVQNANESGTAAVISAGNSGTSGSATEGVNKDYYGLQDNEMVGTPGTSRGATTVASAENTDVITQAVTITDGTGLQLGPGTIQLSSNDFTGSFDQKKFYVVKDASGNLSKGALADYTADAKGKIAIVKRGELSFDDKQKYAQAAGAAGLIIVNNDGTATPVTSMALTTTFPTFGLSSVTGQKLVDWVTAHPDDSLGVKIALTLVPNQKYTEDKMSDFTSYGPVSNLSFKPDITAPGGNIWSTQNNNGYTNMSGTSMASPFIAGSQALLKQALNNKNNPFYAYYKQLKGTALTDFLKTVEMNTAQPINDINYNNVIVSPRRQGAGLVDVKAAIDALEKNPSTVVAENGYPAVELKDFTSTDKTFKLTFTNSTTHELTYQMDSNTDTNAVYTSATDPNSGVLYDKKIDGAAIKAGSNITVPAGKTAQIEFTLSLPKSFDQQQFVEGFLNFKGSDGSRLNLPYMGFFGDWNDGKIVDSLNGITYSPAGGNFGTVPLLTNKNTGTQYYGGMVTDADGNQTVDDQAIAFSSDKNALYNDISMKYYLLRNISNVQVDILDGQGNKVTTLSSSTNLTKTYYNAHSQQYIYYNAPAWDGTYYDQRDGNIKTADDGSYTYRISGVPEGGDKRQVFDVPFKLDSKAPTVRHVALSAKTENGKTQYYLTAEAKDDLSGLDATKSVKTAINEVTNLDATFTDAGTTADGYTKIETPLSDEQAQALGNGDNSAELYLTDNASNATDQDASVQKPGSTSFDLIVNGGGIPDKISSTTTGYEANTQGGGTYTFSGTYPAAVDGTYTNAQGKKHDLNTTYDAATNSFTASMPVTNADYAAQVDLYADKAHTQLLKHFDTKVRLTAPTFTDLKFNNGSDQTSEATIKVTGTVSADTKTVNVGDTVAALDAQHHFSVDVPVNYGDNTIKVTATDEDGNTTTEQKTITSSYDPDMLKNSVTFDQGVTFGANEFNATSAKFYDPKTGIATITGKVKHPTTTLQVDGKQIPIKDDLTFSFTLDLGTLGQKPFGVVVGDTTQNKTFQEALTFILDAVAPTLSLESSTDAPVYTNDPNFQITGTATDNAQYLSLSINGSSVASQYVDININSGKPGHMAIDQPVKLLEGKNVLTVAVTDSEDNTTTKNITVYYEPKKTLAAPTVTPSTTEPAKTVTLTANSAATGETVQYSADGGKTYQDVPAAGVTVTANGTFKFKSTDLYGNESPAVDYVVTNIKADDPAQLQAAKQELTNLIASAKTLSASGKYDDATTTALAAATQKAQTALDQTNASVDSLTGANRDLQTAINQLAAKLPADKKTSLLNQLQSVKAALGTDLGNQTDPSTGKTFTAALDDLVAQAQAGTQTDDQHQATLAKVLDAVLAKLAEGIKAATPAEVGNAKDAATGKTWYADIADTLTSGQASADASDKLAHLQALQSLKTKVAAAVEAAKTVGKGDGTTGTSDKGGGQGTPAPAPGDIGKDKGDEGSQPSSGGNIPTNPATTTSTSTDDTTDRNGQLTSGKGALPKTGETTERPAFGFLGVIVVILMGVLGLKRKQREE</sequence>